<dbReference type="EMBL" id="CP000031">
    <property type="protein sequence ID" value="AAV93816.1"/>
    <property type="molecule type" value="Genomic_DNA"/>
</dbReference>
<dbReference type="RefSeq" id="WP_011046258.1">
    <property type="nucleotide sequence ID" value="NC_003911.12"/>
</dbReference>
<dbReference type="SMR" id="Q5LW44"/>
<dbReference type="STRING" id="246200.SPO0499"/>
<dbReference type="PaxDb" id="246200-SPO0499"/>
<dbReference type="KEGG" id="sil:SPO0499"/>
<dbReference type="eggNOG" id="COG0096">
    <property type="taxonomic scope" value="Bacteria"/>
</dbReference>
<dbReference type="HOGENOM" id="CLU_098428_0_0_5"/>
<dbReference type="OrthoDB" id="9802617at2"/>
<dbReference type="Proteomes" id="UP000001023">
    <property type="component" value="Chromosome"/>
</dbReference>
<dbReference type="GO" id="GO:1990904">
    <property type="term" value="C:ribonucleoprotein complex"/>
    <property type="evidence" value="ECO:0007669"/>
    <property type="project" value="UniProtKB-KW"/>
</dbReference>
<dbReference type="GO" id="GO:0005840">
    <property type="term" value="C:ribosome"/>
    <property type="evidence" value="ECO:0007669"/>
    <property type="project" value="UniProtKB-KW"/>
</dbReference>
<dbReference type="GO" id="GO:0019843">
    <property type="term" value="F:rRNA binding"/>
    <property type="evidence" value="ECO:0007669"/>
    <property type="project" value="UniProtKB-UniRule"/>
</dbReference>
<dbReference type="GO" id="GO:0003735">
    <property type="term" value="F:structural constituent of ribosome"/>
    <property type="evidence" value="ECO:0007669"/>
    <property type="project" value="InterPro"/>
</dbReference>
<dbReference type="GO" id="GO:0006412">
    <property type="term" value="P:translation"/>
    <property type="evidence" value="ECO:0007669"/>
    <property type="project" value="UniProtKB-UniRule"/>
</dbReference>
<dbReference type="FunFam" id="3.30.1370.30:FF:000002">
    <property type="entry name" value="30S ribosomal protein S8"/>
    <property type="match status" value="1"/>
</dbReference>
<dbReference type="FunFam" id="3.30.1490.10:FF:000001">
    <property type="entry name" value="30S ribosomal protein S8"/>
    <property type="match status" value="1"/>
</dbReference>
<dbReference type="Gene3D" id="3.30.1370.30">
    <property type="match status" value="1"/>
</dbReference>
<dbReference type="Gene3D" id="3.30.1490.10">
    <property type="match status" value="1"/>
</dbReference>
<dbReference type="HAMAP" id="MF_01302_B">
    <property type="entry name" value="Ribosomal_uS8_B"/>
    <property type="match status" value="1"/>
</dbReference>
<dbReference type="InterPro" id="IPR000630">
    <property type="entry name" value="Ribosomal_uS8"/>
</dbReference>
<dbReference type="InterPro" id="IPR047863">
    <property type="entry name" value="Ribosomal_uS8_CS"/>
</dbReference>
<dbReference type="InterPro" id="IPR035987">
    <property type="entry name" value="Ribosomal_uS8_sf"/>
</dbReference>
<dbReference type="NCBIfam" id="NF001109">
    <property type="entry name" value="PRK00136.1"/>
    <property type="match status" value="1"/>
</dbReference>
<dbReference type="PANTHER" id="PTHR11758">
    <property type="entry name" value="40S RIBOSOMAL PROTEIN S15A"/>
    <property type="match status" value="1"/>
</dbReference>
<dbReference type="Pfam" id="PF00410">
    <property type="entry name" value="Ribosomal_S8"/>
    <property type="match status" value="1"/>
</dbReference>
<dbReference type="SUPFAM" id="SSF56047">
    <property type="entry name" value="Ribosomal protein S8"/>
    <property type="match status" value="1"/>
</dbReference>
<dbReference type="PROSITE" id="PS00053">
    <property type="entry name" value="RIBOSOMAL_S8"/>
    <property type="match status" value="1"/>
</dbReference>
<reference key="1">
    <citation type="journal article" date="2004" name="Nature">
        <title>Genome sequence of Silicibacter pomeroyi reveals adaptations to the marine environment.</title>
        <authorList>
            <person name="Moran M.A."/>
            <person name="Buchan A."/>
            <person name="Gonzalez J.M."/>
            <person name="Heidelberg J.F."/>
            <person name="Whitman W.B."/>
            <person name="Kiene R.P."/>
            <person name="Henriksen J.R."/>
            <person name="King G.M."/>
            <person name="Belas R."/>
            <person name="Fuqua C."/>
            <person name="Brinkac L.M."/>
            <person name="Lewis M."/>
            <person name="Johri S."/>
            <person name="Weaver B."/>
            <person name="Pai G."/>
            <person name="Eisen J.A."/>
            <person name="Rahe E."/>
            <person name="Sheldon W.M."/>
            <person name="Ye W."/>
            <person name="Miller T.R."/>
            <person name="Carlton J."/>
            <person name="Rasko D.A."/>
            <person name="Paulsen I.T."/>
            <person name="Ren Q."/>
            <person name="Daugherty S.C."/>
            <person name="DeBoy R.T."/>
            <person name="Dodson R.J."/>
            <person name="Durkin A.S."/>
            <person name="Madupu R."/>
            <person name="Nelson W.C."/>
            <person name="Sullivan S.A."/>
            <person name="Rosovitz M.J."/>
            <person name="Haft D.H."/>
            <person name="Selengut J."/>
            <person name="Ward N."/>
        </authorList>
    </citation>
    <scope>NUCLEOTIDE SEQUENCE [LARGE SCALE GENOMIC DNA]</scope>
    <source>
        <strain>ATCC 700808 / DSM 15171 / DSS-3</strain>
    </source>
</reference>
<reference key="2">
    <citation type="journal article" date="2014" name="Stand. Genomic Sci.">
        <title>An updated genome annotation for the model marine bacterium Ruegeria pomeroyi DSS-3.</title>
        <authorList>
            <person name="Rivers A.R."/>
            <person name="Smith C.B."/>
            <person name="Moran M.A."/>
        </authorList>
    </citation>
    <scope>GENOME REANNOTATION</scope>
    <source>
        <strain>ATCC 700808 / DSM 15171 / DSS-3</strain>
    </source>
</reference>
<comment type="function">
    <text evidence="1">One of the primary rRNA binding proteins, it binds directly to 16S rRNA central domain where it helps coordinate assembly of the platform of the 30S subunit.</text>
</comment>
<comment type="subunit">
    <text evidence="1">Part of the 30S ribosomal subunit. Contacts proteins S5 and S12.</text>
</comment>
<comment type="similarity">
    <text evidence="1">Belongs to the universal ribosomal protein uS8 family.</text>
</comment>
<accession>Q5LW44</accession>
<sequence length="130" mass="14263">MNDPIGDMLTRIRNAQLRGKSTVSTPGSKLRAWVLDVLADEGYIRGYEKSTDVNGHPTLNIELKYYEGEPVIRELKRVSKPGRRVYMGVKDIPSVRQGLGVSIVSTPKGVMSDANARSNNVGGEVLCTVF</sequence>
<organism>
    <name type="scientific">Ruegeria pomeroyi (strain ATCC 700808 / DSM 15171 / DSS-3)</name>
    <name type="common">Silicibacter pomeroyi</name>
    <dbReference type="NCBI Taxonomy" id="246200"/>
    <lineage>
        <taxon>Bacteria</taxon>
        <taxon>Pseudomonadati</taxon>
        <taxon>Pseudomonadota</taxon>
        <taxon>Alphaproteobacteria</taxon>
        <taxon>Rhodobacterales</taxon>
        <taxon>Roseobacteraceae</taxon>
        <taxon>Ruegeria</taxon>
    </lineage>
</organism>
<protein>
    <recommendedName>
        <fullName evidence="1">Small ribosomal subunit protein uS8</fullName>
    </recommendedName>
    <alternativeName>
        <fullName evidence="2">30S ribosomal protein S8</fullName>
    </alternativeName>
</protein>
<gene>
    <name evidence="1" type="primary">rpsH</name>
    <name type="ordered locus">SPO0499</name>
</gene>
<name>RS8_RUEPO</name>
<proteinExistence type="inferred from homology"/>
<keyword id="KW-1185">Reference proteome</keyword>
<keyword id="KW-0687">Ribonucleoprotein</keyword>
<keyword id="KW-0689">Ribosomal protein</keyword>
<keyword id="KW-0694">RNA-binding</keyword>
<keyword id="KW-0699">rRNA-binding</keyword>
<evidence type="ECO:0000255" key="1">
    <source>
        <dbReference type="HAMAP-Rule" id="MF_01302"/>
    </source>
</evidence>
<evidence type="ECO:0000305" key="2"/>
<feature type="chain" id="PRO_0000126482" description="Small ribosomal subunit protein uS8">
    <location>
        <begin position="1"/>
        <end position="130"/>
    </location>
</feature>